<feature type="chain" id="PRO_0000414184" description="Ribosomal protein uL3 glutamine methyltransferase">
    <location>
        <begin position="1"/>
        <end position="308"/>
    </location>
</feature>
<dbReference type="EC" id="2.1.1.298" evidence="1"/>
<dbReference type="EMBL" id="AE008922">
    <property type="protein sequence ID" value="AAM41825.1"/>
    <property type="molecule type" value="Genomic_DNA"/>
</dbReference>
<dbReference type="RefSeq" id="NP_637901.1">
    <property type="nucleotide sequence ID" value="NC_003902.1"/>
</dbReference>
<dbReference type="RefSeq" id="WP_011037683.1">
    <property type="nucleotide sequence ID" value="NC_003902.1"/>
</dbReference>
<dbReference type="SMR" id="Q8P7Q8"/>
<dbReference type="STRING" id="190485.XCC2553"/>
<dbReference type="EnsemblBacteria" id="AAM41825">
    <property type="protein sequence ID" value="AAM41825"/>
    <property type="gene ID" value="XCC2553"/>
</dbReference>
<dbReference type="KEGG" id="xcc:XCC2553"/>
<dbReference type="PATRIC" id="fig|190485.4.peg.2720"/>
<dbReference type="eggNOG" id="COG2890">
    <property type="taxonomic scope" value="Bacteria"/>
</dbReference>
<dbReference type="HOGENOM" id="CLU_018398_5_1_6"/>
<dbReference type="OrthoDB" id="9800643at2"/>
<dbReference type="Proteomes" id="UP000001010">
    <property type="component" value="Chromosome"/>
</dbReference>
<dbReference type="GO" id="GO:0005829">
    <property type="term" value="C:cytosol"/>
    <property type="evidence" value="ECO:0000318"/>
    <property type="project" value="GO_Central"/>
</dbReference>
<dbReference type="GO" id="GO:0003676">
    <property type="term" value="F:nucleic acid binding"/>
    <property type="evidence" value="ECO:0007669"/>
    <property type="project" value="InterPro"/>
</dbReference>
<dbReference type="GO" id="GO:0036009">
    <property type="term" value="F:protein-glutamine N-methyltransferase activity"/>
    <property type="evidence" value="ECO:0000318"/>
    <property type="project" value="GO_Central"/>
</dbReference>
<dbReference type="GO" id="GO:0032259">
    <property type="term" value="P:methylation"/>
    <property type="evidence" value="ECO:0007669"/>
    <property type="project" value="UniProtKB-KW"/>
</dbReference>
<dbReference type="CDD" id="cd02440">
    <property type="entry name" value="AdoMet_MTases"/>
    <property type="match status" value="1"/>
</dbReference>
<dbReference type="FunFam" id="1.10.8.10:FF:000022">
    <property type="entry name" value="50S ribosomal protein L3 glutamine methyltransferase"/>
    <property type="match status" value="1"/>
</dbReference>
<dbReference type="FunFam" id="3.40.50.150:FF:000042">
    <property type="entry name" value="50S ribosomal protein L3 glutamine methyltransferase"/>
    <property type="match status" value="1"/>
</dbReference>
<dbReference type="Gene3D" id="1.10.8.10">
    <property type="entry name" value="DNA helicase RuvA subunit, C-terminal domain"/>
    <property type="match status" value="1"/>
</dbReference>
<dbReference type="Gene3D" id="3.40.50.150">
    <property type="entry name" value="Vaccinia Virus protein VP39"/>
    <property type="match status" value="1"/>
</dbReference>
<dbReference type="HAMAP" id="MF_02125">
    <property type="entry name" value="L3_methyltr_PrmB"/>
    <property type="match status" value="1"/>
</dbReference>
<dbReference type="InterPro" id="IPR002052">
    <property type="entry name" value="DNA_methylase_N6_adenine_CS"/>
</dbReference>
<dbReference type="InterPro" id="IPR004556">
    <property type="entry name" value="HemK-like"/>
</dbReference>
<dbReference type="InterPro" id="IPR017127">
    <property type="entry name" value="Ribosome_uL3_MTase"/>
</dbReference>
<dbReference type="InterPro" id="IPR029063">
    <property type="entry name" value="SAM-dependent_MTases_sf"/>
</dbReference>
<dbReference type="InterPro" id="IPR007848">
    <property type="entry name" value="Small_mtfrase_dom"/>
</dbReference>
<dbReference type="NCBIfam" id="TIGR00536">
    <property type="entry name" value="hemK_fam"/>
    <property type="match status" value="1"/>
</dbReference>
<dbReference type="NCBIfam" id="TIGR03533">
    <property type="entry name" value="L3_gln_methyl"/>
    <property type="match status" value="1"/>
</dbReference>
<dbReference type="PANTHER" id="PTHR47806">
    <property type="entry name" value="50S RIBOSOMAL PROTEIN L3 GLUTAMINE METHYLTRANSFERASE"/>
    <property type="match status" value="1"/>
</dbReference>
<dbReference type="PANTHER" id="PTHR47806:SF1">
    <property type="entry name" value="RIBOSOMAL PROTEIN UL3 GLUTAMINE METHYLTRANSFERASE"/>
    <property type="match status" value="1"/>
</dbReference>
<dbReference type="Pfam" id="PF05175">
    <property type="entry name" value="MTS"/>
    <property type="match status" value="1"/>
</dbReference>
<dbReference type="PIRSF" id="PIRSF037167">
    <property type="entry name" value="Mtase_YfcB_prd"/>
    <property type="match status" value="1"/>
</dbReference>
<dbReference type="SUPFAM" id="SSF53335">
    <property type="entry name" value="S-adenosyl-L-methionine-dependent methyltransferases"/>
    <property type="match status" value="1"/>
</dbReference>
<reference key="1">
    <citation type="journal article" date="2002" name="Nature">
        <title>Comparison of the genomes of two Xanthomonas pathogens with differing host specificities.</title>
        <authorList>
            <person name="da Silva A.C.R."/>
            <person name="Ferro J.A."/>
            <person name="Reinach F.C."/>
            <person name="Farah C.S."/>
            <person name="Furlan L.R."/>
            <person name="Quaggio R.B."/>
            <person name="Monteiro-Vitorello C.B."/>
            <person name="Van Sluys M.A."/>
            <person name="Almeida N.F. Jr."/>
            <person name="Alves L.M.C."/>
            <person name="do Amaral A.M."/>
            <person name="Bertolini M.C."/>
            <person name="Camargo L.E.A."/>
            <person name="Camarotte G."/>
            <person name="Cannavan F."/>
            <person name="Cardozo J."/>
            <person name="Chambergo F."/>
            <person name="Ciapina L.P."/>
            <person name="Cicarelli R.M.B."/>
            <person name="Coutinho L.L."/>
            <person name="Cursino-Santos J.R."/>
            <person name="El-Dorry H."/>
            <person name="Faria J.B."/>
            <person name="Ferreira A.J.S."/>
            <person name="Ferreira R.C.C."/>
            <person name="Ferro M.I.T."/>
            <person name="Formighieri E.F."/>
            <person name="Franco M.C."/>
            <person name="Greggio C.C."/>
            <person name="Gruber A."/>
            <person name="Katsuyama A.M."/>
            <person name="Kishi L.T."/>
            <person name="Leite R.P."/>
            <person name="Lemos E.G.M."/>
            <person name="Lemos M.V.F."/>
            <person name="Locali E.C."/>
            <person name="Machado M.A."/>
            <person name="Madeira A.M.B.N."/>
            <person name="Martinez-Rossi N.M."/>
            <person name="Martins E.C."/>
            <person name="Meidanis J."/>
            <person name="Menck C.F.M."/>
            <person name="Miyaki C.Y."/>
            <person name="Moon D.H."/>
            <person name="Moreira L.M."/>
            <person name="Novo M.T.M."/>
            <person name="Okura V.K."/>
            <person name="Oliveira M.C."/>
            <person name="Oliveira V.R."/>
            <person name="Pereira H.A."/>
            <person name="Rossi A."/>
            <person name="Sena J.A.D."/>
            <person name="Silva C."/>
            <person name="de Souza R.F."/>
            <person name="Spinola L.A.F."/>
            <person name="Takita M.A."/>
            <person name="Tamura R.E."/>
            <person name="Teixeira E.C."/>
            <person name="Tezza R.I.D."/>
            <person name="Trindade dos Santos M."/>
            <person name="Truffi D."/>
            <person name="Tsai S.M."/>
            <person name="White F.F."/>
            <person name="Setubal J.C."/>
            <person name="Kitajima J.P."/>
        </authorList>
    </citation>
    <scope>NUCLEOTIDE SEQUENCE [LARGE SCALE GENOMIC DNA]</scope>
    <source>
        <strain>ATCC 33913 / DSM 3586 / NCPPB 528 / LMG 568 / P 25</strain>
    </source>
</reference>
<keyword id="KW-0489">Methyltransferase</keyword>
<keyword id="KW-1185">Reference proteome</keyword>
<keyword id="KW-0949">S-adenosyl-L-methionine</keyword>
<keyword id="KW-0808">Transferase</keyword>
<proteinExistence type="inferred from homology"/>
<protein>
    <recommendedName>
        <fullName evidence="1">Ribosomal protein uL3 glutamine methyltransferase</fullName>
        <shortName evidence="1">uL3 MTase</shortName>
        <ecNumber evidence="1">2.1.1.298</ecNumber>
    </recommendedName>
    <alternativeName>
        <fullName evidence="1">N5-glutamine methyltransferase PrmB</fullName>
    </alternativeName>
</protein>
<comment type="function">
    <text evidence="1">Methylates large ribosomal subunit protein uL3 on a specific glutamine residue.</text>
</comment>
<comment type="catalytic activity">
    <reaction evidence="1">
        <text>L-glutaminyl-[ribosomal protein uL3] + S-adenosyl-L-methionine = N(5)-methyl-L-glutaminyl-[ribosomal protein uL3] + S-adenosyl-L-homocysteine + H(+)</text>
        <dbReference type="Rhea" id="RHEA:45020"/>
        <dbReference type="Rhea" id="RHEA-COMP:11063"/>
        <dbReference type="Rhea" id="RHEA-COMP:11064"/>
        <dbReference type="ChEBI" id="CHEBI:15378"/>
        <dbReference type="ChEBI" id="CHEBI:30011"/>
        <dbReference type="ChEBI" id="CHEBI:57856"/>
        <dbReference type="ChEBI" id="CHEBI:59789"/>
        <dbReference type="ChEBI" id="CHEBI:61891"/>
        <dbReference type="EC" id="2.1.1.298"/>
    </reaction>
</comment>
<comment type="similarity">
    <text evidence="1">Belongs to the protein N5-glutamine methyltransferase family. PrmB subfamily.</text>
</comment>
<organism>
    <name type="scientific">Xanthomonas campestris pv. campestris (strain ATCC 33913 / DSM 3586 / NCPPB 528 / LMG 568 / P 25)</name>
    <dbReference type="NCBI Taxonomy" id="190485"/>
    <lineage>
        <taxon>Bacteria</taxon>
        <taxon>Pseudomonadati</taxon>
        <taxon>Pseudomonadota</taxon>
        <taxon>Gammaproteobacteria</taxon>
        <taxon>Lysobacterales</taxon>
        <taxon>Lysobacteraceae</taxon>
        <taxon>Xanthomonas</taxon>
    </lineage>
</organism>
<sequence length="308" mass="33841">MTAAAADELHTIIDLIRYGTSRFNEAGLTFGHSYDNALDEATQLVLHSLHLPHDLGPAYGQARLLRAEKERVLALFQRRVDERVPAAYLTGEAWFAGLSFKSDARALVPRSPIAELIEAGFEPWLGGREVTRALDLCTGSGCIAIAMGHYNPHWDVDGVDISDDALALAAENKARLHADNVSLLKSDLFTGLAGRQYDLIVTNPPYVTNDETDALPQEYSYEPELGLRAGDDGLDLVLKILRDAPQHLSEDGLLICEVGESEQHLIKLLPEVDFAWVEFKVGQMGIFAVECRELIAHSARITELASAR</sequence>
<gene>
    <name evidence="1" type="primary">prmB</name>
    <name type="ordered locus">XCC2553</name>
</gene>
<evidence type="ECO:0000255" key="1">
    <source>
        <dbReference type="HAMAP-Rule" id="MF_02125"/>
    </source>
</evidence>
<name>PRMB_XANCP</name>
<accession>Q8P7Q8</accession>